<sequence>MARTTPIARYRNIGISAHIDAGKTTTTERILFYTGVNHKIGEVHDGAATMDWMEQEQERGITITSAATTAFWSGMAKQYEPHRINIIDTPGHVDFTIEVERSMRVLDGAVMVYCAVGGVQPQSETVWRQANKYKVPRIAFVNKMDRMGANFLKVVNQIKTRLGANPVPLQLAIGAEEHFTGVVDLVKMKAINWNDADQGVTFEYEDIPADMVELANEWHQNLIESAAEASEELMEKYLGGEELTEAEIKGALRQRVLNNEIILVTCGSAFKNKGVQAMLDAVIDYLPSPVDVPAINGILDDGKDTPAERHASDDEPFSALAFKIATDPFVGNLTFFRVYSGVVNSGDTVLNSVKAARERFGRIVQMHANKREEIKEVRAGDIAAAIGLKDVTTGDTLCDPDAPIILERMEFPEPVISIAVEPKTKADQEKMGLALGRLAKEDPSFRVWTDEESNQTIIAGMGELHLDIIVDRMKREFNVEANVGKPQVAYRETIRQKVTDVEGKHAKQSGGRGQYGHVVIDMYPLEPGSNPKGYEFINDIKGGVIPGEYIPAVDKGIQEQLKAGPLAGYPVVDMGIRLHFGSYHDVDSSELAFKLAASIAFKEGFKKAKPVLLEPIMKVEVETPEENTGDVIGDLSRRRGMLKGQESEVTGVKIHAEVPLSEMFGYATQLRSLTKGRASYTMEFLKYDEAPSNVAQAVIEARGK</sequence>
<dbReference type="EMBL" id="CP000802">
    <property type="protein sequence ID" value="ABV07751.1"/>
    <property type="molecule type" value="Genomic_DNA"/>
</dbReference>
<dbReference type="RefSeq" id="WP_000124700.1">
    <property type="nucleotide sequence ID" value="NC_009800.1"/>
</dbReference>
<dbReference type="SMR" id="A8A5E7"/>
<dbReference type="GeneID" id="93778658"/>
<dbReference type="KEGG" id="ecx:EcHS_A3536"/>
<dbReference type="HOGENOM" id="CLU_002794_4_1_6"/>
<dbReference type="GO" id="GO:0005737">
    <property type="term" value="C:cytoplasm"/>
    <property type="evidence" value="ECO:0007669"/>
    <property type="project" value="UniProtKB-SubCell"/>
</dbReference>
<dbReference type="GO" id="GO:0005525">
    <property type="term" value="F:GTP binding"/>
    <property type="evidence" value="ECO:0007669"/>
    <property type="project" value="UniProtKB-UniRule"/>
</dbReference>
<dbReference type="GO" id="GO:0003924">
    <property type="term" value="F:GTPase activity"/>
    <property type="evidence" value="ECO:0007669"/>
    <property type="project" value="InterPro"/>
</dbReference>
<dbReference type="GO" id="GO:0097216">
    <property type="term" value="F:guanosine tetraphosphate binding"/>
    <property type="evidence" value="ECO:0007669"/>
    <property type="project" value="UniProtKB-ARBA"/>
</dbReference>
<dbReference type="GO" id="GO:0003746">
    <property type="term" value="F:translation elongation factor activity"/>
    <property type="evidence" value="ECO:0007669"/>
    <property type="project" value="UniProtKB-UniRule"/>
</dbReference>
<dbReference type="GO" id="GO:0032790">
    <property type="term" value="P:ribosome disassembly"/>
    <property type="evidence" value="ECO:0007669"/>
    <property type="project" value="TreeGrafter"/>
</dbReference>
<dbReference type="CDD" id="cd01886">
    <property type="entry name" value="EF-G"/>
    <property type="match status" value="1"/>
</dbReference>
<dbReference type="CDD" id="cd16262">
    <property type="entry name" value="EFG_III"/>
    <property type="match status" value="1"/>
</dbReference>
<dbReference type="CDD" id="cd01434">
    <property type="entry name" value="EFG_mtEFG1_IV"/>
    <property type="match status" value="1"/>
</dbReference>
<dbReference type="CDD" id="cd03713">
    <property type="entry name" value="EFG_mtEFG_C"/>
    <property type="match status" value="1"/>
</dbReference>
<dbReference type="CDD" id="cd04088">
    <property type="entry name" value="EFG_mtEFG_II"/>
    <property type="match status" value="1"/>
</dbReference>
<dbReference type="FunFam" id="2.40.30.10:FF:000006">
    <property type="entry name" value="Elongation factor G"/>
    <property type="match status" value="1"/>
</dbReference>
<dbReference type="FunFam" id="3.30.230.10:FF:000003">
    <property type="entry name" value="Elongation factor G"/>
    <property type="match status" value="1"/>
</dbReference>
<dbReference type="FunFam" id="3.30.70.240:FF:000001">
    <property type="entry name" value="Elongation factor G"/>
    <property type="match status" value="1"/>
</dbReference>
<dbReference type="FunFam" id="3.30.70.870:FF:000001">
    <property type="entry name" value="Elongation factor G"/>
    <property type="match status" value="1"/>
</dbReference>
<dbReference type="FunFam" id="3.40.50.300:FF:000029">
    <property type="entry name" value="Elongation factor G"/>
    <property type="match status" value="1"/>
</dbReference>
<dbReference type="Gene3D" id="3.30.230.10">
    <property type="match status" value="1"/>
</dbReference>
<dbReference type="Gene3D" id="3.30.70.240">
    <property type="match status" value="1"/>
</dbReference>
<dbReference type="Gene3D" id="3.30.70.870">
    <property type="entry name" value="Elongation Factor G (Translational Gtpase), domain 3"/>
    <property type="match status" value="1"/>
</dbReference>
<dbReference type="Gene3D" id="3.40.50.300">
    <property type="entry name" value="P-loop containing nucleotide triphosphate hydrolases"/>
    <property type="match status" value="1"/>
</dbReference>
<dbReference type="Gene3D" id="2.40.30.10">
    <property type="entry name" value="Translation factors"/>
    <property type="match status" value="1"/>
</dbReference>
<dbReference type="HAMAP" id="MF_00054_B">
    <property type="entry name" value="EF_G_EF_2_B"/>
    <property type="match status" value="1"/>
</dbReference>
<dbReference type="InterPro" id="IPR041095">
    <property type="entry name" value="EFG_II"/>
</dbReference>
<dbReference type="InterPro" id="IPR009022">
    <property type="entry name" value="EFG_III"/>
</dbReference>
<dbReference type="InterPro" id="IPR035647">
    <property type="entry name" value="EFG_III/V"/>
</dbReference>
<dbReference type="InterPro" id="IPR047872">
    <property type="entry name" value="EFG_IV"/>
</dbReference>
<dbReference type="InterPro" id="IPR035649">
    <property type="entry name" value="EFG_V"/>
</dbReference>
<dbReference type="InterPro" id="IPR000640">
    <property type="entry name" value="EFG_V-like"/>
</dbReference>
<dbReference type="InterPro" id="IPR004161">
    <property type="entry name" value="EFTu-like_2"/>
</dbReference>
<dbReference type="InterPro" id="IPR031157">
    <property type="entry name" value="G_TR_CS"/>
</dbReference>
<dbReference type="InterPro" id="IPR027417">
    <property type="entry name" value="P-loop_NTPase"/>
</dbReference>
<dbReference type="InterPro" id="IPR020568">
    <property type="entry name" value="Ribosomal_Su5_D2-typ_SF"/>
</dbReference>
<dbReference type="InterPro" id="IPR014721">
    <property type="entry name" value="Ribsml_uS5_D2-typ_fold_subgr"/>
</dbReference>
<dbReference type="InterPro" id="IPR005225">
    <property type="entry name" value="Small_GTP-bd"/>
</dbReference>
<dbReference type="InterPro" id="IPR000795">
    <property type="entry name" value="T_Tr_GTP-bd_dom"/>
</dbReference>
<dbReference type="InterPro" id="IPR009000">
    <property type="entry name" value="Transl_B-barrel_sf"/>
</dbReference>
<dbReference type="InterPro" id="IPR004540">
    <property type="entry name" value="Transl_elong_EFG/EF2"/>
</dbReference>
<dbReference type="InterPro" id="IPR005517">
    <property type="entry name" value="Transl_elong_EFG/EF2_IV"/>
</dbReference>
<dbReference type="NCBIfam" id="TIGR00484">
    <property type="entry name" value="EF-G"/>
    <property type="match status" value="1"/>
</dbReference>
<dbReference type="NCBIfam" id="NF009381">
    <property type="entry name" value="PRK12740.1-5"/>
    <property type="match status" value="1"/>
</dbReference>
<dbReference type="NCBIfam" id="TIGR00231">
    <property type="entry name" value="small_GTP"/>
    <property type="match status" value="1"/>
</dbReference>
<dbReference type="PANTHER" id="PTHR43261:SF1">
    <property type="entry name" value="RIBOSOME-RELEASING FACTOR 2, MITOCHONDRIAL"/>
    <property type="match status" value="1"/>
</dbReference>
<dbReference type="PANTHER" id="PTHR43261">
    <property type="entry name" value="TRANSLATION ELONGATION FACTOR G-RELATED"/>
    <property type="match status" value="1"/>
</dbReference>
<dbReference type="Pfam" id="PF00679">
    <property type="entry name" value="EFG_C"/>
    <property type="match status" value="1"/>
</dbReference>
<dbReference type="Pfam" id="PF14492">
    <property type="entry name" value="EFG_III"/>
    <property type="match status" value="1"/>
</dbReference>
<dbReference type="Pfam" id="PF03764">
    <property type="entry name" value="EFG_IV"/>
    <property type="match status" value="1"/>
</dbReference>
<dbReference type="Pfam" id="PF00009">
    <property type="entry name" value="GTP_EFTU"/>
    <property type="match status" value="1"/>
</dbReference>
<dbReference type="Pfam" id="PF03144">
    <property type="entry name" value="GTP_EFTU_D2"/>
    <property type="match status" value="1"/>
</dbReference>
<dbReference type="PRINTS" id="PR00315">
    <property type="entry name" value="ELONGATNFCT"/>
</dbReference>
<dbReference type="SMART" id="SM00838">
    <property type="entry name" value="EFG_C"/>
    <property type="match status" value="1"/>
</dbReference>
<dbReference type="SMART" id="SM00889">
    <property type="entry name" value="EFG_IV"/>
    <property type="match status" value="1"/>
</dbReference>
<dbReference type="SUPFAM" id="SSF54980">
    <property type="entry name" value="EF-G C-terminal domain-like"/>
    <property type="match status" value="2"/>
</dbReference>
<dbReference type="SUPFAM" id="SSF52540">
    <property type="entry name" value="P-loop containing nucleoside triphosphate hydrolases"/>
    <property type="match status" value="1"/>
</dbReference>
<dbReference type="SUPFAM" id="SSF54211">
    <property type="entry name" value="Ribosomal protein S5 domain 2-like"/>
    <property type="match status" value="1"/>
</dbReference>
<dbReference type="SUPFAM" id="SSF50447">
    <property type="entry name" value="Translation proteins"/>
    <property type="match status" value="1"/>
</dbReference>
<dbReference type="PROSITE" id="PS00301">
    <property type="entry name" value="G_TR_1"/>
    <property type="match status" value="1"/>
</dbReference>
<dbReference type="PROSITE" id="PS51722">
    <property type="entry name" value="G_TR_2"/>
    <property type="match status" value="1"/>
</dbReference>
<name>EFG_ECOHS</name>
<evidence type="ECO:0000250" key="1"/>
<evidence type="ECO:0000255" key="2">
    <source>
        <dbReference type="HAMAP-Rule" id="MF_00054"/>
    </source>
</evidence>
<organism>
    <name type="scientific">Escherichia coli O9:H4 (strain HS)</name>
    <dbReference type="NCBI Taxonomy" id="331112"/>
    <lineage>
        <taxon>Bacteria</taxon>
        <taxon>Pseudomonadati</taxon>
        <taxon>Pseudomonadota</taxon>
        <taxon>Gammaproteobacteria</taxon>
        <taxon>Enterobacterales</taxon>
        <taxon>Enterobacteriaceae</taxon>
        <taxon>Escherichia</taxon>
    </lineage>
</organism>
<comment type="function">
    <text evidence="2">Catalyzes the GTP-dependent ribosomal translocation step during translation elongation. During this step, the ribosome changes from the pre-translocational (PRE) to the post-translocational (POST) state as the newly formed A-site-bound peptidyl-tRNA and P-site-bound deacylated tRNA move to the P and E sites, respectively. Catalyzes the coordinated movement of the two tRNA molecules, the mRNA and conformational changes in the ribosome.</text>
</comment>
<comment type="subcellular location">
    <subcellularLocation>
        <location evidence="2">Cytoplasm</location>
    </subcellularLocation>
</comment>
<comment type="similarity">
    <text evidence="2">Belongs to the TRAFAC class translation factor GTPase superfamily. Classic translation factor GTPase family. EF-G/EF-2 subfamily.</text>
</comment>
<gene>
    <name evidence="2" type="primary">fusA</name>
    <name type="ordered locus">EcHS_A3536</name>
</gene>
<accession>A8A5E7</accession>
<proteinExistence type="inferred from homology"/>
<protein>
    <recommendedName>
        <fullName evidence="2">Elongation factor G</fullName>
        <shortName evidence="2">EF-G</shortName>
    </recommendedName>
</protein>
<reference key="1">
    <citation type="journal article" date="2008" name="J. Bacteriol.">
        <title>The pangenome structure of Escherichia coli: comparative genomic analysis of E. coli commensal and pathogenic isolates.</title>
        <authorList>
            <person name="Rasko D.A."/>
            <person name="Rosovitz M.J."/>
            <person name="Myers G.S.A."/>
            <person name="Mongodin E.F."/>
            <person name="Fricke W.F."/>
            <person name="Gajer P."/>
            <person name="Crabtree J."/>
            <person name="Sebaihia M."/>
            <person name="Thomson N.R."/>
            <person name="Chaudhuri R."/>
            <person name="Henderson I.R."/>
            <person name="Sperandio V."/>
            <person name="Ravel J."/>
        </authorList>
    </citation>
    <scope>NUCLEOTIDE SEQUENCE [LARGE SCALE GENOMIC DNA]</scope>
    <source>
        <strain>HS</strain>
    </source>
</reference>
<keyword id="KW-0007">Acetylation</keyword>
<keyword id="KW-0963">Cytoplasm</keyword>
<keyword id="KW-0251">Elongation factor</keyword>
<keyword id="KW-0342">GTP-binding</keyword>
<keyword id="KW-0547">Nucleotide-binding</keyword>
<keyword id="KW-0648">Protein biosynthesis</keyword>
<feature type="chain" id="PRO_1000057389" description="Elongation factor G">
    <location>
        <begin position="1"/>
        <end position="704"/>
    </location>
</feature>
<feature type="domain" description="tr-type G">
    <location>
        <begin position="8"/>
        <end position="290"/>
    </location>
</feature>
<feature type="binding site" evidence="2">
    <location>
        <begin position="17"/>
        <end position="24"/>
    </location>
    <ligand>
        <name>GTP</name>
        <dbReference type="ChEBI" id="CHEBI:37565"/>
    </ligand>
</feature>
<feature type="binding site" evidence="2">
    <location>
        <begin position="88"/>
        <end position="92"/>
    </location>
    <ligand>
        <name>GTP</name>
        <dbReference type="ChEBI" id="CHEBI:37565"/>
    </ligand>
</feature>
<feature type="binding site" evidence="2">
    <location>
        <begin position="142"/>
        <end position="145"/>
    </location>
    <ligand>
        <name>GTP</name>
        <dbReference type="ChEBI" id="CHEBI:37565"/>
    </ligand>
</feature>
<feature type="modified residue" description="N6-acetyllysine" evidence="1">
    <location>
        <position position="504"/>
    </location>
</feature>
<feature type="modified residue" description="N6-acetyllysine" evidence="1">
    <location>
        <position position="643"/>
    </location>
</feature>